<organism>
    <name type="scientific">Salmonella dublin (strain CT_02021853)</name>
    <dbReference type="NCBI Taxonomy" id="439851"/>
    <lineage>
        <taxon>Bacteria</taxon>
        <taxon>Pseudomonadati</taxon>
        <taxon>Pseudomonadota</taxon>
        <taxon>Gammaproteobacteria</taxon>
        <taxon>Enterobacterales</taxon>
        <taxon>Enterobacteriaceae</taxon>
        <taxon>Salmonella</taxon>
    </lineage>
</organism>
<sequence>MLIIETLPLLRQHIRRLRQEGKRVALVPTMGNLHDGHMKLVDEAKARADVVIVSIFVNPMQFDRPDDLVRYPRTLQEDCEKLNKRKVDYVFAPAVEEIYPQGLEGQTYVDVPGLSTMLEGASRPGHFRGVSTIVSKLFNLIQPDIACFGEKDFQQLALIRKMVADMSYDIEIVGVPIIRAKDGLALSSRNAYLTAEQRKIAPGLYNVMNSIAEKLIAGNRELQEIIAIAEQELNEKGFRADDIQIRDADTLQELTETSKRAVILAAAWLGQARLIDNQSVTLAQ</sequence>
<proteinExistence type="inferred from homology"/>
<gene>
    <name evidence="1" type="primary">panC</name>
    <name type="ordered locus">SeD_A0197</name>
</gene>
<protein>
    <recommendedName>
        <fullName evidence="1">Pantothenate synthetase</fullName>
        <shortName evidence="1">PS</shortName>
        <ecNumber evidence="1">6.3.2.1</ecNumber>
    </recommendedName>
    <alternativeName>
        <fullName evidence="1">Pantoate--beta-alanine ligase</fullName>
    </alternativeName>
    <alternativeName>
        <fullName evidence="1">Pantoate-activating enzyme</fullName>
    </alternativeName>
</protein>
<accession>B5FIX7</accession>
<keyword id="KW-0067">ATP-binding</keyword>
<keyword id="KW-0963">Cytoplasm</keyword>
<keyword id="KW-0436">Ligase</keyword>
<keyword id="KW-0547">Nucleotide-binding</keyword>
<keyword id="KW-0566">Pantothenate biosynthesis</keyword>
<comment type="function">
    <text evidence="1">Catalyzes the condensation of pantoate with beta-alanine in an ATP-dependent reaction via a pantoyl-adenylate intermediate.</text>
</comment>
<comment type="catalytic activity">
    <reaction evidence="1">
        <text>(R)-pantoate + beta-alanine + ATP = (R)-pantothenate + AMP + diphosphate + H(+)</text>
        <dbReference type="Rhea" id="RHEA:10912"/>
        <dbReference type="ChEBI" id="CHEBI:15378"/>
        <dbReference type="ChEBI" id="CHEBI:15980"/>
        <dbReference type="ChEBI" id="CHEBI:29032"/>
        <dbReference type="ChEBI" id="CHEBI:30616"/>
        <dbReference type="ChEBI" id="CHEBI:33019"/>
        <dbReference type="ChEBI" id="CHEBI:57966"/>
        <dbReference type="ChEBI" id="CHEBI:456215"/>
        <dbReference type="EC" id="6.3.2.1"/>
    </reaction>
</comment>
<comment type="pathway">
    <text evidence="1">Cofactor biosynthesis; (R)-pantothenate biosynthesis; (R)-pantothenate from (R)-pantoate and beta-alanine: step 1/1.</text>
</comment>
<comment type="subunit">
    <text evidence="1">Homodimer.</text>
</comment>
<comment type="subcellular location">
    <subcellularLocation>
        <location evidence="1">Cytoplasm</location>
    </subcellularLocation>
</comment>
<comment type="miscellaneous">
    <text evidence="1">The reaction proceeds by a bi uni uni bi ping pong mechanism.</text>
</comment>
<comment type="similarity">
    <text evidence="1">Belongs to the pantothenate synthetase family.</text>
</comment>
<name>PANC_SALDC</name>
<feature type="chain" id="PRO_1000097099" description="Pantothenate synthetase">
    <location>
        <begin position="1"/>
        <end position="284"/>
    </location>
</feature>
<feature type="active site" description="Proton donor" evidence="1">
    <location>
        <position position="37"/>
    </location>
</feature>
<feature type="binding site" evidence="1">
    <location>
        <begin position="30"/>
        <end position="37"/>
    </location>
    <ligand>
        <name>ATP</name>
        <dbReference type="ChEBI" id="CHEBI:30616"/>
    </ligand>
</feature>
<feature type="binding site" evidence="1">
    <location>
        <position position="61"/>
    </location>
    <ligand>
        <name>(R)-pantoate</name>
        <dbReference type="ChEBI" id="CHEBI:15980"/>
    </ligand>
</feature>
<feature type="binding site" evidence="1">
    <location>
        <position position="61"/>
    </location>
    <ligand>
        <name>beta-alanine</name>
        <dbReference type="ChEBI" id="CHEBI:57966"/>
    </ligand>
</feature>
<feature type="binding site" evidence="1">
    <location>
        <begin position="149"/>
        <end position="152"/>
    </location>
    <ligand>
        <name>ATP</name>
        <dbReference type="ChEBI" id="CHEBI:30616"/>
    </ligand>
</feature>
<feature type="binding site" evidence="1">
    <location>
        <position position="155"/>
    </location>
    <ligand>
        <name>(R)-pantoate</name>
        <dbReference type="ChEBI" id="CHEBI:15980"/>
    </ligand>
</feature>
<feature type="binding site" evidence="1">
    <location>
        <position position="178"/>
    </location>
    <ligand>
        <name>ATP</name>
        <dbReference type="ChEBI" id="CHEBI:30616"/>
    </ligand>
</feature>
<feature type="binding site" evidence="1">
    <location>
        <begin position="186"/>
        <end position="189"/>
    </location>
    <ligand>
        <name>ATP</name>
        <dbReference type="ChEBI" id="CHEBI:30616"/>
    </ligand>
</feature>
<dbReference type="EC" id="6.3.2.1" evidence="1"/>
<dbReference type="EMBL" id="CP001144">
    <property type="protein sequence ID" value="ACH75231.1"/>
    <property type="molecule type" value="Genomic_DNA"/>
</dbReference>
<dbReference type="RefSeq" id="WP_000905348.1">
    <property type="nucleotide sequence ID" value="NC_011205.1"/>
</dbReference>
<dbReference type="SMR" id="B5FIX7"/>
<dbReference type="KEGG" id="sed:SeD_A0197"/>
<dbReference type="HOGENOM" id="CLU_047148_0_0_6"/>
<dbReference type="UniPathway" id="UPA00028">
    <property type="reaction ID" value="UER00005"/>
</dbReference>
<dbReference type="Proteomes" id="UP000008322">
    <property type="component" value="Chromosome"/>
</dbReference>
<dbReference type="GO" id="GO:0005829">
    <property type="term" value="C:cytosol"/>
    <property type="evidence" value="ECO:0007669"/>
    <property type="project" value="TreeGrafter"/>
</dbReference>
<dbReference type="GO" id="GO:0005524">
    <property type="term" value="F:ATP binding"/>
    <property type="evidence" value="ECO:0007669"/>
    <property type="project" value="UniProtKB-KW"/>
</dbReference>
<dbReference type="GO" id="GO:0004592">
    <property type="term" value="F:pantoate-beta-alanine ligase activity"/>
    <property type="evidence" value="ECO:0007669"/>
    <property type="project" value="UniProtKB-UniRule"/>
</dbReference>
<dbReference type="GO" id="GO:0015940">
    <property type="term" value="P:pantothenate biosynthetic process"/>
    <property type="evidence" value="ECO:0007669"/>
    <property type="project" value="UniProtKB-UniRule"/>
</dbReference>
<dbReference type="CDD" id="cd00560">
    <property type="entry name" value="PanC"/>
    <property type="match status" value="1"/>
</dbReference>
<dbReference type="FunFam" id="3.30.1300.10:FF:000001">
    <property type="entry name" value="Pantothenate synthetase"/>
    <property type="match status" value="1"/>
</dbReference>
<dbReference type="FunFam" id="3.40.50.620:FF:000013">
    <property type="entry name" value="Pantothenate synthetase"/>
    <property type="match status" value="1"/>
</dbReference>
<dbReference type="Gene3D" id="3.40.50.620">
    <property type="entry name" value="HUPs"/>
    <property type="match status" value="1"/>
</dbReference>
<dbReference type="Gene3D" id="3.30.1300.10">
    <property type="entry name" value="Pantoate-beta-alanine ligase, C-terminal domain"/>
    <property type="match status" value="1"/>
</dbReference>
<dbReference type="HAMAP" id="MF_00158">
    <property type="entry name" value="PanC"/>
    <property type="match status" value="1"/>
</dbReference>
<dbReference type="InterPro" id="IPR004821">
    <property type="entry name" value="Cyt_trans-like"/>
</dbReference>
<dbReference type="InterPro" id="IPR003721">
    <property type="entry name" value="Pantoate_ligase"/>
</dbReference>
<dbReference type="InterPro" id="IPR042176">
    <property type="entry name" value="Pantoate_ligase_C"/>
</dbReference>
<dbReference type="InterPro" id="IPR014729">
    <property type="entry name" value="Rossmann-like_a/b/a_fold"/>
</dbReference>
<dbReference type="NCBIfam" id="TIGR00125">
    <property type="entry name" value="cyt_tran_rel"/>
    <property type="match status" value="1"/>
</dbReference>
<dbReference type="NCBIfam" id="TIGR00018">
    <property type="entry name" value="panC"/>
    <property type="match status" value="1"/>
</dbReference>
<dbReference type="PANTHER" id="PTHR21299">
    <property type="entry name" value="CYTIDYLATE KINASE/PANTOATE-BETA-ALANINE LIGASE"/>
    <property type="match status" value="1"/>
</dbReference>
<dbReference type="PANTHER" id="PTHR21299:SF1">
    <property type="entry name" value="PANTOATE--BETA-ALANINE LIGASE"/>
    <property type="match status" value="1"/>
</dbReference>
<dbReference type="Pfam" id="PF02569">
    <property type="entry name" value="Pantoate_ligase"/>
    <property type="match status" value="1"/>
</dbReference>
<dbReference type="SUPFAM" id="SSF52374">
    <property type="entry name" value="Nucleotidylyl transferase"/>
    <property type="match status" value="1"/>
</dbReference>
<evidence type="ECO:0000255" key="1">
    <source>
        <dbReference type="HAMAP-Rule" id="MF_00158"/>
    </source>
</evidence>
<reference key="1">
    <citation type="journal article" date="2011" name="J. Bacteriol.">
        <title>Comparative genomics of 28 Salmonella enterica isolates: evidence for CRISPR-mediated adaptive sublineage evolution.</title>
        <authorList>
            <person name="Fricke W.F."/>
            <person name="Mammel M.K."/>
            <person name="McDermott P.F."/>
            <person name="Tartera C."/>
            <person name="White D.G."/>
            <person name="Leclerc J.E."/>
            <person name="Ravel J."/>
            <person name="Cebula T.A."/>
        </authorList>
    </citation>
    <scope>NUCLEOTIDE SEQUENCE [LARGE SCALE GENOMIC DNA]</scope>
    <source>
        <strain>CT_02021853</strain>
    </source>
</reference>